<keyword id="KW-0129">CBS domain</keyword>
<keyword id="KW-1003">Cell membrane</keyword>
<keyword id="KW-0472">Membrane</keyword>
<keyword id="KW-1185">Reference proteome</keyword>
<keyword id="KW-0677">Repeat</keyword>
<keyword id="KW-0812">Transmembrane</keyword>
<keyword id="KW-1133">Transmembrane helix</keyword>
<dbReference type="EMBL" id="Y14082">
    <property type="protein sequence ID" value="CAA74500.1"/>
    <property type="molecule type" value="Genomic_DNA"/>
</dbReference>
<dbReference type="EMBL" id="AL009126">
    <property type="protein sequence ID" value="CAB12794.1"/>
    <property type="molecule type" value="Genomic_DNA"/>
</dbReference>
<dbReference type="PIR" id="F69826">
    <property type="entry name" value="F69826"/>
</dbReference>
<dbReference type="RefSeq" id="NP_388836.1">
    <property type="nucleotide sequence ID" value="NC_000964.3"/>
</dbReference>
<dbReference type="RefSeq" id="WP_009966903.1">
    <property type="nucleotide sequence ID" value="NZ_OZ025638.1"/>
</dbReference>
<dbReference type="SMR" id="O07585"/>
<dbReference type="FunCoup" id="O07585">
    <property type="interactions" value="571"/>
</dbReference>
<dbReference type="IntAct" id="O07585">
    <property type="interactions" value="3"/>
</dbReference>
<dbReference type="STRING" id="224308.BSU09550"/>
<dbReference type="TCDB" id="1.A.112.2.4">
    <property type="family name" value="the cyclin m mg2+ exporter (cnnm) family"/>
</dbReference>
<dbReference type="PaxDb" id="224308-BSU09550"/>
<dbReference type="DNASU" id="939280"/>
<dbReference type="EnsemblBacteria" id="CAB12794">
    <property type="protein sequence ID" value="CAB12794"/>
    <property type="gene ID" value="BSU_09550"/>
</dbReference>
<dbReference type="GeneID" id="939280"/>
<dbReference type="KEGG" id="bsu:BSU09550"/>
<dbReference type="PATRIC" id="fig|224308.179.peg.1028"/>
<dbReference type="eggNOG" id="COG1253">
    <property type="taxonomic scope" value="Bacteria"/>
</dbReference>
<dbReference type="InParanoid" id="O07585"/>
<dbReference type="OrthoDB" id="9798188at2"/>
<dbReference type="PhylomeDB" id="O07585"/>
<dbReference type="BioCyc" id="BSUB:BSU09550-MONOMER"/>
<dbReference type="Proteomes" id="UP000001570">
    <property type="component" value="Chromosome"/>
</dbReference>
<dbReference type="GO" id="GO:0005886">
    <property type="term" value="C:plasma membrane"/>
    <property type="evidence" value="ECO:0007669"/>
    <property type="project" value="UniProtKB-SubCell"/>
</dbReference>
<dbReference type="GO" id="GO:0050660">
    <property type="term" value="F:flavin adenine dinucleotide binding"/>
    <property type="evidence" value="ECO:0007669"/>
    <property type="project" value="InterPro"/>
</dbReference>
<dbReference type="CDD" id="cd04590">
    <property type="entry name" value="CBS_pair_CorC_HlyC_assoc"/>
    <property type="match status" value="1"/>
</dbReference>
<dbReference type="FunFam" id="3.10.580.10:FF:000002">
    <property type="entry name" value="Magnesium/cobalt efflux protein CorC"/>
    <property type="match status" value="1"/>
</dbReference>
<dbReference type="Gene3D" id="3.30.465.10">
    <property type="match status" value="1"/>
</dbReference>
<dbReference type="Gene3D" id="3.10.580.10">
    <property type="entry name" value="CBS-domain"/>
    <property type="match status" value="1"/>
</dbReference>
<dbReference type="InterPro" id="IPR000644">
    <property type="entry name" value="CBS_dom"/>
</dbReference>
<dbReference type="InterPro" id="IPR046342">
    <property type="entry name" value="CBS_dom_sf"/>
</dbReference>
<dbReference type="InterPro" id="IPR002550">
    <property type="entry name" value="CNNM"/>
</dbReference>
<dbReference type="InterPro" id="IPR036318">
    <property type="entry name" value="FAD-bd_PCMH-like_sf"/>
</dbReference>
<dbReference type="InterPro" id="IPR016169">
    <property type="entry name" value="FAD-bd_PCMH_sub2"/>
</dbReference>
<dbReference type="InterPro" id="IPR044751">
    <property type="entry name" value="Ion_transp-like_CBS"/>
</dbReference>
<dbReference type="InterPro" id="IPR005170">
    <property type="entry name" value="Transptr-assoc_dom"/>
</dbReference>
<dbReference type="InterPro" id="IPR051676">
    <property type="entry name" value="UPF0053_domain"/>
</dbReference>
<dbReference type="PANTHER" id="PTHR43099">
    <property type="entry name" value="UPF0053 PROTEIN YRKA"/>
    <property type="match status" value="1"/>
</dbReference>
<dbReference type="PANTHER" id="PTHR43099:SF2">
    <property type="entry name" value="UPF0053 PROTEIN YRKA"/>
    <property type="match status" value="1"/>
</dbReference>
<dbReference type="Pfam" id="PF00571">
    <property type="entry name" value="CBS"/>
    <property type="match status" value="2"/>
</dbReference>
<dbReference type="Pfam" id="PF01595">
    <property type="entry name" value="CNNM"/>
    <property type="match status" value="1"/>
</dbReference>
<dbReference type="Pfam" id="PF03471">
    <property type="entry name" value="CorC_HlyC"/>
    <property type="match status" value="1"/>
</dbReference>
<dbReference type="SMART" id="SM01091">
    <property type="entry name" value="CorC_HlyC"/>
    <property type="match status" value="1"/>
</dbReference>
<dbReference type="SUPFAM" id="SSF54631">
    <property type="entry name" value="CBS-domain pair"/>
    <property type="match status" value="1"/>
</dbReference>
<dbReference type="SUPFAM" id="SSF56176">
    <property type="entry name" value="FAD-binding/transporter-associated domain-like"/>
    <property type="match status" value="1"/>
</dbReference>
<dbReference type="PROSITE" id="PS51371">
    <property type="entry name" value="CBS"/>
    <property type="match status" value="2"/>
</dbReference>
<dbReference type="PROSITE" id="PS51846">
    <property type="entry name" value="CNNM"/>
    <property type="match status" value="1"/>
</dbReference>
<evidence type="ECO:0000255" key="1"/>
<evidence type="ECO:0000255" key="2">
    <source>
        <dbReference type="PROSITE-ProRule" id="PRU00703"/>
    </source>
</evidence>
<evidence type="ECO:0000255" key="3">
    <source>
        <dbReference type="PROSITE-ProRule" id="PRU01193"/>
    </source>
</evidence>
<evidence type="ECO:0000305" key="4"/>
<sequence length="444" mass="49855">MDIVNLILVAVLIALTAFFVASEFAIIRIRGSRIDQLIAEGNKAAIAVKKVTTHLDEYLSACQLGITLTSIGLGVLGESTIERLLHPLFVQMNVPGSLSHVISFIFAYAIITFLHVVVGELAPKTVAIQKAEAVSMLFAKPLIWFYRIAFPFIWLLNNSARLLTKAFGLETVSENELAHSEEELRIILSESYKSGEINQSEFKYVNKIFEFDDRLAKEIMIPRTEIVSLPHDIKISEMMDIIQIEKYTRYPVEEGDKDNIIGVINIKEVLTACISGEVSVDSTISQFVNPIIHVIESAPIQDLLVKMQKERVHMAILSDEYGGTAGLVTVEDIIEEIVGEIRDEFDIDEISEIRKIGEGHYILDGKVLIDQVNDLLGIHLENEEVDTIGGWFLTQKYDVEKDDSIIEEGCEFIINEIDGHHVAYIEVKKLQEEELLETANQQEA</sequence>
<gene>
    <name type="primary">yhdP</name>
    <name type="ordered locus">BSU09550</name>
</gene>
<reference key="1">
    <citation type="journal article" date="1998" name="Microbiology">
        <title>The 172 kb prkA-addAB region from 83 degrees to 97 degrees of the Bacillus subtilis chromosome contains several dysfunctional genes, the glyB marker, many genes encoding transporter proteins, and the ubiquitous hit gene.</title>
        <authorList>
            <person name="Noback M.A."/>
            <person name="Holsappel S."/>
            <person name="Kiewiet R."/>
            <person name="Terpstra P."/>
            <person name="Wambutt R."/>
            <person name="Wedler H."/>
            <person name="Venema G."/>
            <person name="Bron S."/>
        </authorList>
    </citation>
    <scope>NUCLEOTIDE SEQUENCE [GENOMIC DNA]</scope>
    <source>
        <strain>168</strain>
    </source>
</reference>
<reference key="2">
    <citation type="journal article" date="1997" name="Nature">
        <title>The complete genome sequence of the Gram-positive bacterium Bacillus subtilis.</title>
        <authorList>
            <person name="Kunst F."/>
            <person name="Ogasawara N."/>
            <person name="Moszer I."/>
            <person name="Albertini A.M."/>
            <person name="Alloni G."/>
            <person name="Azevedo V."/>
            <person name="Bertero M.G."/>
            <person name="Bessieres P."/>
            <person name="Bolotin A."/>
            <person name="Borchert S."/>
            <person name="Borriss R."/>
            <person name="Boursier L."/>
            <person name="Brans A."/>
            <person name="Braun M."/>
            <person name="Brignell S.C."/>
            <person name="Bron S."/>
            <person name="Brouillet S."/>
            <person name="Bruschi C.V."/>
            <person name="Caldwell B."/>
            <person name="Capuano V."/>
            <person name="Carter N.M."/>
            <person name="Choi S.-K."/>
            <person name="Codani J.-J."/>
            <person name="Connerton I.F."/>
            <person name="Cummings N.J."/>
            <person name="Daniel R.A."/>
            <person name="Denizot F."/>
            <person name="Devine K.M."/>
            <person name="Duesterhoeft A."/>
            <person name="Ehrlich S.D."/>
            <person name="Emmerson P.T."/>
            <person name="Entian K.-D."/>
            <person name="Errington J."/>
            <person name="Fabret C."/>
            <person name="Ferrari E."/>
            <person name="Foulger D."/>
            <person name="Fritz C."/>
            <person name="Fujita M."/>
            <person name="Fujita Y."/>
            <person name="Fuma S."/>
            <person name="Galizzi A."/>
            <person name="Galleron N."/>
            <person name="Ghim S.-Y."/>
            <person name="Glaser P."/>
            <person name="Goffeau A."/>
            <person name="Golightly E.J."/>
            <person name="Grandi G."/>
            <person name="Guiseppi G."/>
            <person name="Guy B.J."/>
            <person name="Haga K."/>
            <person name="Haiech J."/>
            <person name="Harwood C.R."/>
            <person name="Henaut A."/>
            <person name="Hilbert H."/>
            <person name="Holsappel S."/>
            <person name="Hosono S."/>
            <person name="Hullo M.-F."/>
            <person name="Itaya M."/>
            <person name="Jones L.-M."/>
            <person name="Joris B."/>
            <person name="Karamata D."/>
            <person name="Kasahara Y."/>
            <person name="Klaerr-Blanchard M."/>
            <person name="Klein C."/>
            <person name="Kobayashi Y."/>
            <person name="Koetter P."/>
            <person name="Koningstein G."/>
            <person name="Krogh S."/>
            <person name="Kumano M."/>
            <person name="Kurita K."/>
            <person name="Lapidus A."/>
            <person name="Lardinois S."/>
            <person name="Lauber J."/>
            <person name="Lazarevic V."/>
            <person name="Lee S.-M."/>
            <person name="Levine A."/>
            <person name="Liu H."/>
            <person name="Masuda S."/>
            <person name="Mauel C."/>
            <person name="Medigue C."/>
            <person name="Medina N."/>
            <person name="Mellado R.P."/>
            <person name="Mizuno M."/>
            <person name="Moestl D."/>
            <person name="Nakai S."/>
            <person name="Noback M."/>
            <person name="Noone D."/>
            <person name="O'Reilly M."/>
            <person name="Ogawa K."/>
            <person name="Ogiwara A."/>
            <person name="Oudega B."/>
            <person name="Park S.-H."/>
            <person name="Parro V."/>
            <person name="Pohl T.M."/>
            <person name="Portetelle D."/>
            <person name="Porwollik S."/>
            <person name="Prescott A.M."/>
            <person name="Presecan E."/>
            <person name="Pujic P."/>
            <person name="Purnelle B."/>
            <person name="Rapoport G."/>
            <person name="Rey M."/>
            <person name="Reynolds S."/>
            <person name="Rieger M."/>
            <person name="Rivolta C."/>
            <person name="Rocha E."/>
            <person name="Roche B."/>
            <person name="Rose M."/>
            <person name="Sadaie Y."/>
            <person name="Sato T."/>
            <person name="Scanlan E."/>
            <person name="Schleich S."/>
            <person name="Schroeter R."/>
            <person name="Scoffone F."/>
            <person name="Sekiguchi J."/>
            <person name="Sekowska A."/>
            <person name="Seror S.J."/>
            <person name="Serror P."/>
            <person name="Shin B.-S."/>
            <person name="Soldo B."/>
            <person name="Sorokin A."/>
            <person name="Tacconi E."/>
            <person name="Takagi T."/>
            <person name="Takahashi H."/>
            <person name="Takemaru K."/>
            <person name="Takeuchi M."/>
            <person name="Tamakoshi A."/>
            <person name="Tanaka T."/>
            <person name="Terpstra P."/>
            <person name="Tognoni A."/>
            <person name="Tosato V."/>
            <person name="Uchiyama S."/>
            <person name="Vandenbol M."/>
            <person name="Vannier F."/>
            <person name="Vassarotti A."/>
            <person name="Viari A."/>
            <person name="Wambutt R."/>
            <person name="Wedler E."/>
            <person name="Wedler H."/>
            <person name="Weitzenegger T."/>
            <person name="Winters P."/>
            <person name="Wipat A."/>
            <person name="Yamamoto H."/>
            <person name="Yamane K."/>
            <person name="Yasumoto K."/>
            <person name="Yata K."/>
            <person name="Yoshida K."/>
            <person name="Yoshikawa H.-F."/>
            <person name="Zumstein E."/>
            <person name="Yoshikawa H."/>
            <person name="Danchin A."/>
        </authorList>
    </citation>
    <scope>NUCLEOTIDE SEQUENCE [LARGE SCALE GENOMIC DNA]</scope>
    <source>
        <strain>168</strain>
    </source>
</reference>
<organism>
    <name type="scientific">Bacillus subtilis (strain 168)</name>
    <dbReference type="NCBI Taxonomy" id="224308"/>
    <lineage>
        <taxon>Bacteria</taxon>
        <taxon>Bacillati</taxon>
        <taxon>Bacillota</taxon>
        <taxon>Bacilli</taxon>
        <taxon>Bacillales</taxon>
        <taxon>Bacillaceae</taxon>
        <taxon>Bacillus</taxon>
    </lineage>
</organism>
<protein>
    <recommendedName>
        <fullName>UPF0053 protein YhdP</fullName>
    </recommendedName>
</protein>
<name>YHDP_BACSU</name>
<proteinExistence type="inferred from homology"/>
<feature type="chain" id="PRO_0000088370" description="UPF0053 protein YhdP">
    <location>
        <begin position="1"/>
        <end position="444"/>
    </location>
</feature>
<feature type="transmembrane region" description="Helical" evidence="1">
    <location>
        <begin position="7"/>
        <end position="27"/>
    </location>
</feature>
<feature type="transmembrane region" description="Helical" evidence="1">
    <location>
        <begin position="61"/>
        <end position="81"/>
    </location>
</feature>
<feature type="transmembrane region" description="Helical" evidence="1">
    <location>
        <begin position="101"/>
        <end position="121"/>
    </location>
</feature>
<feature type="domain" description="CNNM transmembrane" evidence="3">
    <location>
        <begin position="1"/>
        <end position="201"/>
    </location>
</feature>
<feature type="domain" description="CBS 1" evidence="2">
    <location>
        <begin position="220"/>
        <end position="282"/>
    </location>
</feature>
<feature type="domain" description="CBS 2" evidence="2">
    <location>
        <begin position="284"/>
        <end position="344"/>
    </location>
</feature>
<comment type="subcellular location">
    <subcellularLocation>
        <location evidence="4">Cell membrane</location>
        <topology evidence="4">Multi-pass membrane protein</topology>
    </subcellularLocation>
</comment>
<comment type="similarity">
    <text evidence="4">Belongs to the UPF0053 family.</text>
</comment>
<accession>O07585</accession>